<protein>
    <recommendedName>
        <fullName>Rhodopsin</fullName>
    </recommendedName>
</protein>
<keyword id="KW-0966">Cell projection</keyword>
<keyword id="KW-0157">Chromophore</keyword>
<keyword id="KW-1015">Disulfide bond</keyword>
<keyword id="KW-0297">G-protein coupled receptor</keyword>
<keyword id="KW-0325">Glycoprotein</keyword>
<keyword id="KW-0449">Lipoprotein</keyword>
<keyword id="KW-0472">Membrane</keyword>
<keyword id="KW-0564">Palmitate</keyword>
<keyword id="KW-0597">Phosphoprotein</keyword>
<keyword id="KW-0600">Photoreceptor protein</keyword>
<keyword id="KW-0675">Receptor</keyword>
<keyword id="KW-0681">Retinal protein</keyword>
<keyword id="KW-0716">Sensory transduction</keyword>
<keyword id="KW-0807">Transducer</keyword>
<keyword id="KW-0812">Transmembrane</keyword>
<keyword id="KW-1133">Transmembrane helix</keyword>
<keyword id="KW-0844">Vision</keyword>
<organism>
    <name type="scientific">Diplodus vulgaris</name>
    <name type="common">Common two-banded seabream</name>
    <name type="synonym">Sargus vulgaris</name>
    <dbReference type="NCBI Taxonomy" id="87756"/>
    <lineage>
        <taxon>Eukaryota</taxon>
        <taxon>Metazoa</taxon>
        <taxon>Chordata</taxon>
        <taxon>Craniata</taxon>
        <taxon>Vertebrata</taxon>
        <taxon>Euteleostomi</taxon>
        <taxon>Actinopterygii</taxon>
        <taxon>Neopterygii</taxon>
        <taxon>Teleostei</taxon>
        <taxon>Neoteleostei</taxon>
        <taxon>Acanthomorphata</taxon>
        <taxon>Eupercaria</taxon>
        <taxon>Spariformes</taxon>
        <taxon>Sparidae</taxon>
        <taxon>Diplodus</taxon>
    </lineage>
</organism>
<evidence type="ECO:0000250" key="1">
    <source>
        <dbReference type="UniProtKB" id="P02699"/>
    </source>
</evidence>
<evidence type="ECO:0000250" key="2">
    <source>
        <dbReference type="UniProtKB" id="P08100"/>
    </source>
</evidence>
<evidence type="ECO:0000250" key="3">
    <source>
        <dbReference type="UniProtKB" id="P32309"/>
    </source>
</evidence>
<evidence type="ECO:0000250" key="4">
    <source>
        <dbReference type="UniProtKB" id="P35359"/>
    </source>
</evidence>
<evidence type="ECO:0000255" key="5"/>
<evidence type="ECO:0000255" key="6">
    <source>
        <dbReference type="PROSITE-ProRule" id="PRU00521"/>
    </source>
</evidence>
<evidence type="ECO:0000256" key="7">
    <source>
        <dbReference type="SAM" id="MobiDB-lite"/>
    </source>
</evidence>
<evidence type="ECO:0000305" key="8"/>
<sequence>MNGTEGPYFYVPMVNTSGIVRSPYEYPQYYLVNPAAYAALGAYMFLLILVGFPINFLTLYVTIEHKKLRTPLNYILLNLAVADLFMVFGGFTTTMYTSMHGYFVLGRLGCNIEGFFATLGGEIALWSLVVLAIERWVVVCKPISNFRFGENHAIMGLAFTWLMALACAAPPLVGWSRYIPEGMQCSCGIDYYTRAEGFNNESFVIYMFICHFSIPLLVVFFCYGRLLCAVKEAAAAQQESETTQRAEREVTRMVIMMVIAFLVCWLPYASVAWWIFTHQGSDFGPVFMTIPAFFAKSSSIYNPMIYICLNKQFRHCMITTLCCGKNPFEEEEGASTASKTEASSVSSSSVSPA</sequence>
<dbReference type="EMBL" id="Y18663">
    <property type="protein sequence ID" value="CAA77245.1"/>
    <property type="molecule type" value="mRNA"/>
</dbReference>
<dbReference type="SMR" id="Q9YH04"/>
<dbReference type="GlyCosmos" id="Q9YH04">
    <property type="glycosylation" value="3 sites, No reported glycans"/>
</dbReference>
<dbReference type="GO" id="GO:0016020">
    <property type="term" value="C:membrane"/>
    <property type="evidence" value="ECO:0000250"/>
    <property type="project" value="UniProtKB"/>
</dbReference>
<dbReference type="GO" id="GO:0097381">
    <property type="term" value="C:photoreceptor disc membrane"/>
    <property type="evidence" value="ECO:0000250"/>
    <property type="project" value="UniProtKB"/>
</dbReference>
<dbReference type="GO" id="GO:0005886">
    <property type="term" value="C:plasma membrane"/>
    <property type="evidence" value="ECO:0000250"/>
    <property type="project" value="UniProtKB"/>
</dbReference>
<dbReference type="GO" id="GO:0005502">
    <property type="term" value="F:11-cis retinal binding"/>
    <property type="evidence" value="ECO:0000250"/>
    <property type="project" value="UniProtKB"/>
</dbReference>
<dbReference type="GO" id="GO:0008020">
    <property type="term" value="F:G protein-coupled photoreceptor activity"/>
    <property type="evidence" value="ECO:0000250"/>
    <property type="project" value="UniProtKB"/>
</dbReference>
<dbReference type="GO" id="GO:0016038">
    <property type="term" value="P:absorption of visible light"/>
    <property type="evidence" value="ECO:0000250"/>
    <property type="project" value="UniProtKB"/>
</dbReference>
<dbReference type="GO" id="GO:0016056">
    <property type="term" value="P:G protein-coupled opsin signaling pathway"/>
    <property type="evidence" value="ECO:0000250"/>
    <property type="project" value="UniProtKB"/>
</dbReference>
<dbReference type="GO" id="GO:0007601">
    <property type="term" value="P:visual perception"/>
    <property type="evidence" value="ECO:0007669"/>
    <property type="project" value="UniProtKB-KW"/>
</dbReference>
<dbReference type="CDD" id="cd15080">
    <property type="entry name" value="7tmA_MWS_opsin"/>
    <property type="match status" value="1"/>
</dbReference>
<dbReference type="FunFam" id="1.20.1070.10:FF:000018">
    <property type="entry name" value="Rhodopsin"/>
    <property type="match status" value="1"/>
</dbReference>
<dbReference type="Gene3D" id="1.20.1070.10">
    <property type="entry name" value="Rhodopsin 7-helix transmembrane proteins"/>
    <property type="match status" value="1"/>
</dbReference>
<dbReference type="InterPro" id="IPR050125">
    <property type="entry name" value="GPCR_opsins"/>
</dbReference>
<dbReference type="InterPro" id="IPR000276">
    <property type="entry name" value="GPCR_Rhodpsn"/>
</dbReference>
<dbReference type="InterPro" id="IPR017452">
    <property type="entry name" value="GPCR_Rhodpsn_7TM"/>
</dbReference>
<dbReference type="InterPro" id="IPR001760">
    <property type="entry name" value="Opsin"/>
</dbReference>
<dbReference type="InterPro" id="IPR027430">
    <property type="entry name" value="Retinal_BS"/>
</dbReference>
<dbReference type="InterPro" id="IPR000732">
    <property type="entry name" value="Rhodopsin"/>
</dbReference>
<dbReference type="InterPro" id="IPR019477">
    <property type="entry name" value="Rhodopsin_N"/>
</dbReference>
<dbReference type="PANTHER" id="PTHR24240">
    <property type="entry name" value="OPSIN"/>
    <property type="match status" value="1"/>
</dbReference>
<dbReference type="Pfam" id="PF00001">
    <property type="entry name" value="7tm_1"/>
    <property type="match status" value="1"/>
</dbReference>
<dbReference type="Pfam" id="PF10413">
    <property type="entry name" value="Rhodopsin_N"/>
    <property type="match status" value="1"/>
</dbReference>
<dbReference type="PRINTS" id="PR00237">
    <property type="entry name" value="GPCRRHODOPSN"/>
</dbReference>
<dbReference type="PRINTS" id="PR00238">
    <property type="entry name" value="OPSIN"/>
</dbReference>
<dbReference type="PRINTS" id="PR00579">
    <property type="entry name" value="RHODOPSIN"/>
</dbReference>
<dbReference type="SUPFAM" id="SSF81321">
    <property type="entry name" value="Family A G protein-coupled receptor-like"/>
    <property type="match status" value="1"/>
</dbReference>
<dbReference type="PROSITE" id="PS00237">
    <property type="entry name" value="G_PROTEIN_RECEP_F1_1"/>
    <property type="match status" value="1"/>
</dbReference>
<dbReference type="PROSITE" id="PS50262">
    <property type="entry name" value="G_PROTEIN_RECEP_F1_2"/>
    <property type="match status" value="1"/>
</dbReference>
<dbReference type="PROSITE" id="PS00238">
    <property type="entry name" value="OPSIN"/>
    <property type="match status" value="1"/>
</dbReference>
<comment type="function">
    <text evidence="1 2 3">Photoreceptor required for image-forming vision at low light intensity. While most salt water fish species use retinal as chromophore, most freshwater fish use 3-dehydroretinal, or a mixture of retinal and 3-dehydroretinal (By similarity). Light-induced isomerization of 11-cis to all-trans retinal triggers a conformational change that activates signaling via G-proteins. Subsequent receptor phosphorylation mediates displacement of the bound G-protein alpha subunit by arrestin and terminates signaling (By similarity).</text>
</comment>
<comment type="subcellular location">
    <subcellularLocation>
        <location evidence="2">Membrane</location>
        <topology evidence="2">Multi-pass membrane protein</topology>
    </subcellularLocation>
    <subcellularLocation>
        <location evidence="4">Cell projection</location>
        <location evidence="4">Cilium</location>
        <location evidence="4">Photoreceptor outer segment</location>
    </subcellularLocation>
    <text evidence="2">Synthesized in the inner segment (IS) of rod photoreceptor cells before vectorial transport to disk membranes in the rod outer segment (OS) photosensory cilia.</text>
</comment>
<comment type="PTM">
    <text evidence="1">Phosphorylated on some or all of the serine and threonine residues present in the C-terminal region.</text>
</comment>
<comment type="PTM">
    <text evidence="1">Contains one covalently linked retinal chromophore.</text>
</comment>
<comment type="similarity">
    <text evidence="6">Belongs to the G-protein coupled receptor 1 family. Opsin subfamily.</text>
</comment>
<feature type="chain" id="PRO_0000197672" description="Rhodopsin">
    <location>
        <begin position="1"/>
        <end position="353"/>
    </location>
</feature>
<feature type="topological domain" description="Extracellular" evidence="8">
    <location>
        <begin position="1"/>
        <end position="36"/>
    </location>
</feature>
<feature type="transmembrane region" description="Helical; Name=1" evidence="1">
    <location>
        <begin position="37"/>
        <end position="61"/>
    </location>
</feature>
<feature type="topological domain" description="Cytoplasmic" evidence="8">
    <location>
        <begin position="62"/>
        <end position="73"/>
    </location>
</feature>
<feature type="transmembrane region" description="Helical; Name=2" evidence="1">
    <location>
        <begin position="74"/>
        <end position="96"/>
    </location>
</feature>
<feature type="topological domain" description="Extracellular" evidence="8">
    <location>
        <begin position="97"/>
        <end position="110"/>
    </location>
</feature>
<feature type="transmembrane region" description="Helical; Name=3" evidence="1">
    <location>
        <begin position="111"/>
        <end position="133"/>
    </location>
</feature>
<feature type="topological domain" description="Cytoplasmic" evidence="8">
    <location>
        <begin position="134"/>
        <end position="152"/>
    </location>
</feature>
<feature type="transmembrane region" description="Helical; Name=4" evidence="1">
    <location>
        <begin position="153"/>
        <end position="173"/>
    </location>
</feature>
<feature type="topological domain" description="Extracellular" evidence="8">
    <location>
        <begin position="174"/>
        <end position="202"/>
    </location>
</feature>
<feature type="transmembrane region" description="Helical; Name=5" evidence="1">
    <location>
        <begin position="203"/>
        <end position="224"/>
    </location>
</feature>
<feature type="topological domain" description="Cytoplasmic" evidence="8">
    <location>
        <begin position="225"/>
        <end position="252"/>
    </location>
</feature>
<feature type="transmembrane region" description="Helical; Name=6" evidence="1">
    <location>
        <begin position="253"/>
        <end position="274"/>
    </location>
</feature>
<feature type="topological domain" description="Extracellular" evidence="8">
    <location>
        <begin position="275"/>
        <end position="286"/>
    </location>
</feature>
<feature type="transmembrane region" description="Helical; Name=7" evidence="1">
    <location>
        <begin position="287"/>
        <end position="308"/>
    </location>
</feature>
<feature type="topological domain" description="Cytoplasmic" evidence="8">
    <location>
        <begin position="309"/>
        <end position="353"/>
    </location>
</feature>
<feature type="region of interest" description="Disordered" evidence="7">
    <location>
        <begin position="331"/>
        <end position="353"/>
    </location>
</feature>
<feature type="short sequence motif" description="'Ionic lock' involved in activated form stabilization" evidence="1">
    <location>
        <begin position="134"/>
        <end position="136"/>
    </location>
</feature>
<feature type="compositionally biased region" description="Low complexity" evidence="7">
    <location>
        <begin position="334"/>
        <end position="353"/>
    </location>
</feature>
<feature type="site" description="Plays an important role in the conformation switch to the active conformation" evidence="1">
    <location>
        <position position="113"/>
    </location>
</feature>
<feature type="modified residue" description="N6-(retinylidene)lysine" evidence="1">
    <location>
        <position position="296"/>
    </location>
</feature>
<feature type="lipid moiety-binding region" description="S-palmitoyl cysteine" evidence="1">
    <location>
        <position position="322"/>
    </location>
</feature>
<feature type="lipid moiety-binding region" description="S-palmitoyl cysteine" evidence="1">
    <location>
        <position position="323"/>
    </location>
</feature>
<feature type="glycosylation site" description="N-linked (GlcNAc...) asparagine" evidence="5">
    <location>
        <position position="2"/>
    </location>
</feature>
<feature type="glycosylation site" description="N-linked (GlcNAc...) asparagine" evidence="5">
    <location>
        <position position="15"/>
    </location>
</feature>
<feature type="glycosylation site" description="N-linked (GlcNAc...) asparagine" evidence="5">
    <location>
        <position position="200"/>
    </location>
</feature>
<feature type="disulfide bond" evidence="6">
    <location>
        <begin position="110"/>
        <end position="187"/>
    </location>
</feature>
<proteinExistence type="evidence at transcript level"/>
<gene>
    <name type="primary">rho</name>
</gene>
<name>OPSD_DIPVU</name>
<accession>Q9YH04</accession>
<reference key="1">
    <citation type="submission" date="1999-01" db="EMBL/GenBank/DDBJ databases">
        <title>Comparative analysis of opsins in Mediterranian coastal fish.</title>
        <authorList>
            <person name="Archer S.N."/>
            <person name="Hirano J."/>
        </authorList>
    </citation>
    <scope>NUCLEOTIDE SEQUENCE [MRNA]</scope>
    <source>
        <tissue>Retina</tissue>
    </source>
</reference>